<gene>
    <name evidence="1" type="primary">lolA</name>
    <name type="ordered locus">PSEEN2213</name>
</gene>
<name>LOLA_PSEE4</name>
<reference key="1">
    <citation type="journal article" date="2006" name="Nat. Biotechnol.">
        <title>Complete genome sequence of the entomopathogenic and metabolically versatile soil bacterium Pseudomonas entomophila.</title>
        <authorList>
            <person name="Vodovar N."/>
            <person name="Vallenet D."/>
            <person name="Cruveiller S."/>
            <person name="Rouy Z."/>
            <person name="Barbe V."/>
            <person name="Acosta C."/>
            <person name="Cattolico L."/>
            <person name="Jubin C."/>
            <person name="Lajus A."/>
            <person name="Segurens B."/>
            <person name="Vacherie B."/>
            <person name="Wincker P."/>
            <person name="Weissenbach J."/>
            <person name="Lemaitre B."/>
            <person name="Medigue C."/>
            <person name="Boccard F."/>
        </authorList>
    </citation>
    <scope>NUCLEOTIDE SEQUENCE [LARGE SCALE GENOMIC DNA]</scope>
    <source>
        <strain>L48</strain>
    </source>
</reference>
<evidence type="ECO:0000255" key="1">
    <source>
        <dbReference type="HAMAP-Rule" id="MF_00240"/>
    </source>
</evidence>
<feature type="signal peptide" evidence="1">
    <location>
        <begin position="1"/>
        <end position="21"/>
    </location>
</feature>
<feature type="chain" id="PRO_1000005703" description="Outer-membrane lipoprotein carrier protein">
    <location>
        <begin position="22"/>
        <end position="207"/>
    </location>
</feature>
<comment type="function">
    <text evidence="1">Participates in the translocation of lipoproteins from the inner membrane to the outer membrane. Only forms a complex with a lipoprotein if the residue after the N-terminal Cys is not an aspartate (The Asp acts as a targeting signal to indicate that the lipoprotein should stay in the inner membrane).</text>
</comment>
<comment type="subunit">
    <text evidence="1">Monomer.</text>
</comment>
<comment type="subcellular location">
    <subcellularLocation>
        <location evidence="1">Periplasm</location>
    </subcellularLocation>
</comment>
<comment type="similarity">
    <text evidence="1">Belongs to the LolA family.</text>
</comment>
<keyword id="KW-0143">Chaperone</keyword>
<keyword id="KW-0574">Periplasm</keyword>
<keyword id="KW-0653">Protein transport</keyword>
<keyword id="KW-0732">Signal</keyword>
<keyword id="KW-0813">Transport</keyword>
<dbReference type="EMBL" id="CT573326">
    <property type="protein sequence ID" value="CAK15032.1"/>
    <property type="molecule type" value="Genomic_DNA"/>
</dbReference>
<dbReference type="RefSeq" id="WP_011533434.1">
    <property type="nucleotide sequence ID" value="NC_008027.1"/>
</dbReference>
<dbReference type="SMR" id="Q1IBD3"/>
<dbReference type="STRING" id="384676.PSEEN2213"/>
<dbReference type="GeneID" id="32805411"/>
<dbReference type="KEGG" id="pen:PSEEN2213"/>
<dbReference type="eggNOG" id="COG2834">
    <property type="taxonomic scope" value="Bacteria"/>
</dbReference>
<dbReference type="HOGENOM" id="CLU_087560_0_0_6"/>
<dbReference type="OrthoDB" id="9787361at2"/>
<dbReference type="Proteomes" id="UP000000658">
    <property type="component" value="Chromosome"/>
</dbReference>
<dbReference type="GO" id="GO:0030288">
    <property type="term" value="C:outer membrane-bounded periplasmic space"/>
    <property type="evidence" value="ECO:0007669"/>
    <property type="project" value="TreeGrafter"/>
</dbReference>
<dbReference type="GO" id="GO:0044874">
    <property type="term" value="P:lipoprotein localization to outer membrane"/>
    <property type="evidence" value="ECO:0007669"/>
    <property type="project" value="UniProtKB-UniRule"/>
</dbReference>
<dbReference type="GO" id="GO:0042953">
    <property type="term" value="P:lipoprotein transport"/>
    <property type="evidence" value="ECO:0007669"/>
    <property type="project" value="InterPro"/>
</dbReference>
<dbReference type="CDD" id="cd16325">
    <property type="entry name" value="LolA"/>
    <property type="match status" value="1"/>
</dbReference>
<dbReference type="Gene3D" id="2.50.20.10">
    <property type="entry name" value="Lipoprotein localisation LolA/LolB/LppX"/>
    <property type="match status" value="1"/>
</dbReference>
<dbReference type="HAMAP" id="MF_00240">
    <property type="entry name" value="LolA"/>
    <property type="match status" value="1"/>
</dbReference>
<dbReference type="InterPro" id="IPR029046">
    <property type="entry name" value="LolA/LolB/LppX"/>
</dbReference>
<dbReference type="InterPro" id="IPR004564">
    <property type="entry name" value="OM_lipoprot_carrier_LolA-like"/>
</dbReference>
<dbReference type="InterPro" id="IPR018323">
    <property type="entry name" value="OM_lipoprot_carrier_LolA_Pbac"/>
</dbReference>
<dbReference type="NCBIfam" id="TIGR00547">
    <property type="entry name" value="lolA"/>
    <property type="match status" value="1"/>
</dbReference>
<dbReference type="PANTHER" id="PTHR35869">
    <property type="entry name" value="OUTER-MEMBRANE LIPOPROTEIN CARRIER PROTEIN"/>
    <property type="match status" value="1"/>
</dbReference>
<dbReference type="PANTHER" id="PTHR35869:SF1">
    <property type="entry name" value="OUTER-MEMBRANE LIPOPROTEIN CARRIER PROTEIN"/>
    <property type="match status" value="1"/>
</dbReference>
<dbReference type="Pfam" id="PF03548">
    <property type="entry name" value="LolA"/>
    <property type="match status" value="1"/>
</dbReference>
<dbReference type="SUPFAM" id="SSF89392">
    <property type="entry name" value="Prokaryotic lipoproteins and lipoprotein localization factors"/>
    <property type="match status" value="1"/>
</dbReference>
<protein>
    <recommendedName>
        <fullName evidence="1">Outer-membrane lipoprotein carrier protein</fullName>
    </recommendedName>
</protein>
<organism>
    <name type="scientific">Pseudomonas entomophila (strain L48)</name>
    <dbReference type="NCBI Taxonomy" id="384676"/>
    <lineage>
        <taxon>Bacteria</taxon>
        <taxon>Pseudomonadati</taxon>
        <taxon>Pseudomonadota</taxon>
        <taxon>Gammaproteobacteria</taxon>
        <taxon>Pseudomonadales</taxon>
        <taxon>Pseudomonadaceae</taxon>
        <taxon>Pseudomonas</taxon>
    </lineage>
</organism>
<sequence length="207" mass="22753">MRAIRMLLVSALAMGAVSAHADEKDVARLTQLLEKSQTITARFSQLTLDASGTSLQEANGEMAVKRPGLFYWHTDAPQEQVVVSDGQKVTLWDPDLEQATIKKLDVRLSQTPALLLSGDVSKISQSFDISSKEQGEVTDFTLKPKTKDTLFDSLRVSFRKGLINDMQLVDSVGQRTNILFNGVKANEAIPASKFKFDVPKGADVIQE</sequence>
<accession>Q1IBD3</accession>
<proteinExistence type="inferred from homology"/>